<reference key="1">
    <citation type="submission" date="2007-03" db="EMBL/GenBank/DDBJ databases">
        <title>Complete sequence of chromosome 1 of Burkholderia vietnamiensis G4.</title>
        <authorList>
            <consortium name="US DOE Joint Genome Institute"/>
            <person name="Copeland A."/>
            <person name="Lucas S."/>
            <person name="Lapidus A."/>
            <person name="Barry K."/>
            <person name="Detter J.C."/>
            <person name="Glavina del Rio T."/>
            <person name="Hammon N."/>
            <person name="Israni S."/>
            <person name="Dalin E."/>
            <person name="Tice H."/>
            <person name="Pitluck S."/>
            <person name="Chain P."/>
            <person name="Malfatti S."/>
            <person name="Shin M."/>
            <person name="Vergez L."/>
            <person name="Schmutz J."/>
            <person name="Larimer F."/>
            <person name="Land M."/>
            <person name="Hauser L."/>
            <person name="Kyrpides N."/>
            <person name="Tiedje J."/>
            <person name="Richardson P."/>
        </authorList>
    </citation>
    <scope>NUCLEOTIDE SEQUENCE [LARGE SCALE GENOMIC DNA]</scope>
    <source>
        <strain>G4 / LMG 22486</strain>
    </source>
</reference>
<feature type="chain" id="PRO_1000001376" description="Holliday junction branch migration complex subunit RuvB">
    <location>
        <begin position="1"/>
        <end position="355"/>
    </location>
</feature>
<feature type="region of interest" description="Large ATPase domain (RuvB-L)" evidence="1">
    <location>
        <begin position="4"/>
        <end position="190"/>
    </location>
</feature>
<feature type="region of interest" description="Small ATPAse domain (RuvB-S)" evidence="1">
    <location>
        <begin position="191"/>
        <end position="261"/>
    </location>
</feature>
<feature type="region of interest" description="Head domain (RuvB-H)" evidence="1">
    <location>
        <begin position="264"/>
        <end position="355"/>
    </location>
</feature>
<feature type="binding site" evidence="1">
    <location>
        <position position="29"/>
    </location>
    <ligand>
        <name>ATP</name>
        <dbReference type="ChEBI" id="CHEBI:30616"/>
    </ligand>
</feature>
<feature type="binding site" evidence="1">
    <location>
        <position position="30"/>
    </location>
    <ligand>
        <name>ATP</name>
        <dbReference type="ChEBI" id="CHEBI:30616"/>
    </ligand>
</feature>
<feature type="binding site" evidence="1">
    <location>
        <position position="71"/>
    </location>
    <ligand>
        <name>ATP</name>
        <dbReference type="ChEBI" id="CHEBI:30616"/>
    </ligand>
</feature>
<feature type="binding site" evidence="1">
    <location>
        <position position="74"/>
    </location>
    <ligand>
        <name>ATP</name>
        <dbReference type="ChEBI" id="CHEBI:30616"/>
    </ligand>
</feature>
<feature type="binding site" evidence="1">
    <location>
        <position position="75"/>
    </location>
    <ligand>
        <name>ATP</name>
        <dbReference type="ChEBI" id="CHEBI:30616"/>
    </ligand>
</feature>
<feature type="binding site" evidence="1">
    <location>
        <position position="75"/>
    </location>
    <ligand>
        <name>Mg(2+)</name>
        <dbReference type="ChEBI" id="CHEBI:18420"/>
    </ligand>
</feature>
<feature type="binding site" evidence="1">
    <location>
        <position position="76"/>
    </location>
    <ligand>
        <name>ATP</name>
        <dbReference type="ChEBI" id="CHEBI:30616"/>
    </ligand>
</feature>
<feature type="binding site" evidence="1">
    <location>
        <begin position="137"/>
        <end position="139"/>
    </location>
    <ligand>
        <name>ATP</name>
        <dbReference type="ChEBI" id="CHEBI:30616"/>
    </ligand>
</feature>
<feature type="binding site" evidence="1">
    <location>
        <position position="180"/>
    </location>
    <ligand>
        <name>ATP</name>
        <dbReference type="ChEBI" id="CHEBI:30616"/>
    </ligand>
</feature>
<feature type="binding site" evidence="1">
    <location>
        <position position="190"/>
    </location>
    <ligand>
        <name>ATP</name>
        <dbReference type="ChEBI" id="CHEBI:30616"/>
    </ligand>
</feature>
<feature type="binding site" evidence="1">
    <location>
        <position position="227"/>
    </location>
    <ligand>
        <name>ATP</name>
        <dbReference type="ChEBI" id="CHEBI:30616"/>
    </ligand>
</feature>
<feature type="binding site" evidence="1">
    <location>
        <position position="300"/>
    </location>
    <ligand>
        <name>DNA</name>
        <dbReference type="ChEBI" id="CHEBI:16991"/>
    </ligand>
</feature>
<feature type="binding site" evidence="1">
    <location>
        <position position="319"/>
    </location>
    <ligand>
        <name>DNA</name>
        <dbReference type="ChEBI" id="CHEBI:16991"/>
    </ligand>
</feature>
<feature type="binding site" evidence="1">
    <location>
        <position position="324"/>
    </location>
    <ligand>
        <name>DNA</name>
        <dbReference type="ChEBI" id="CHEBI:16991"/>
    </ligand>
</feature>
<organism>
    <name type="scientific">Burkholderia vietnamiensis (strain G4 / LMG 22486)</name>
    <name type="common">Burkholderia cepacia (strain R1808)</name>
    <dbReference type="NCBI Taxonomy" id="269482"/>
    <lineage>
        <taxon>Bacteria</taxon>
        <taxon>Pseudomonadati</taxon>
        <taxon>Pseudomonadota</taxon>
        <taxon>Betaproteobacteria</taxon>
        <taxon>Burkholderiales</taxon>
        <taxon>Burkholderiaceae</taxon>
        <taxon>Burkholderia</taxon>
        <taxon>Burkholderia cepacia complex</taxon>
    </lineage>
</organism>
<proteinExistence type="inferred from homology"/>
<dbReference type="EC" id="3.6.4.-" evidence="1"/>
<dbReference type="EMBL" id="CP000614">
    <property type="protein sequence ID" value="ABO53665.1"/>
    <property type="molecule type" value="Genomic_DNA"/>
</dbReference>
<dbReference type="SMR" id="A4JBL2"/>
<dbReference type="KEGG" id="bvi:Bcep1808_0653"/>
<dbReference type="eggNOG" id="COG2255">
    <property type="taxonomic scope" value="Bacteria"/>
</dbReference>
<dbReference type="HOGENOM" id="CLU_055599_1_0_4"/>
<dbReference type="Proteomes" id="UP000002287">
    <property type="component" value="Chromosome 1"/>
</dbReference>
<dbReference type="GO" id="GO:0005737">
    <property type="term" value="C:cytoplasm"/>
    <property type="evidence" value="ECO:0007669"/>
    <property type="project" value="UniProtKB-SubCell"/>
</dbReference>
<dbReference type="GO" id="GO:0048476">
    <property type="term" value="C:Holliday junction resolvase complex"/>
    <property type="evidence" value="ECO:0007669"/>
    <property type="project" value="UniProtKB-UniRule"/>
</dbReference>
<dbReference type="GO" id="GO:0005524">
    <property type="term" value="F:ATP binding"/>
    <property type="evidence" value="ECO:0007669"/>
    <property type="project" value="UniProtKB-UniRule"/>
</dbReference>
<dbReference type="GO" id="GO:0016887">
    <property type="term" value="F:ATP hydrolysis activity"/>
    <property type="evidence" value="ECO:0007669"/>
    <property type="project" value="InterPro"/>
</dbReference>
<dbReference type="GO" id="GO:0000400">
    <property type="term" value="F:four-way junction DNA binding"/>
    <property type="evidence" value="ECO:0007669"/>
    <property type="project" value="UniProtKB-UniRule"/>
</dbReference>
<dbReference type="GO" id="GO:0009378">
    <property type="term" value="F:four-way junction helicase activity"/>
    <property type="evidence" value="ECO:0007669"/>
    <property type="project" value="InterPro"/>
</dbReference>
<dbReference type="GO" id="GO:0006310">
    <property type="term" value="P:DNA recombination"/>
    <property type="evidence" value="ECO:0007669"/>
    <property type="project" value="UniProtKB-UniRule"/>
</dbReference>
<dbReference type="GO" id="GO:0006281">
    <property type="term" value="P:DNA repair"/>
    <property type="evidence" value="ECO:0007669"/>
    <property type="project" value="UniProtKB-UniRule"/>
</dbReference>
<dbReference type="CDD" id="cd00009">
    <property type="entry name" value="AAA"/>
    <property type="match status" value="1"/>
</dbReference>
<dbReference type="FunFam" id="1.10.10.10:FF:000086">
    <property type="entry name" value="Holliday junction ATP-dependent DNA helicase RuvB"/>
    <property type="match status" value="1"/>
</dbReference>
<dbReference type="FunFam" id="1.10.8.60:FF:000023">
    <property type="entry name" value="Holliday junction ATP-dependent DNA helicase RuvB"/>
    <property type="match status" value="1"/>
</dbReference>
<dbReference type="FunFam" id="3.40.50.300:FF:000073">
    <property type="entry name" value="Holliday junction ATP-dependent DNA helicase RuvB"/>
    <property type="match status" value="1"/>
</dbReference>
<dbReference type="Gene3D" id="1.10.8.60">
    <property type="match status" value="1"/>
</dbReference>
<dbReference type="Gene3D" id="3.40.50.300">
    <property type="entry name" value="P-loop containing nucleotide triphosphate hydrolases"/>
    <property type="match status" value="1"/>
</dbReference>
<dbReference type="Gene3D" id="1.10.10.10">
    <property type="entry name" value="Winged helix-like DNA-binding domain superfamily/Winged helix DNA-binding domain"/>
    <property type="match status" value="1"/>
</dbReference>
<dbReference type="HAMAP" id="MF_00016">
    <property type="entry name" value="DNA_HJ_migration_RuvB"/>
    <property type="match status" value="1"/>
</dbReference>
<dbReference type="InterPro" id="IPR003593">
    <property type="entry name" value="AAA+_ATPase"/>
</dbReference>
<dbReference type="InterPro" id="IPR041445">
    <property type="entry name" value="AAA_lid_4"/>
</dbReference>
<dbReference type="InterPro" id="IPR004605">
    <property type="entry name" value="DNA_helicase_Holl-junc_RuvB"/>
</dbReference>
<dbReference type="InterPro" id="IPR027417">
    <property type="entry name" value="P-loop_NTPase"/>
</dbReference>
<dbReference type="InterPro" id="IPR008824">
    <property type="entry name" value="RuvB-like_N"/>
</dbReference>
<dbReference type="InterPro" id="IPR008823">
    <property type="entry name" value="RuvB_C"/>
</dbReference>
<dbReference type="InterPro" id="IPR036388">
    <property type="entry name" value="WH-like_DNA-bd_sf"/>
</dbReference>
<dbReference type="InterPro" id="IPR036390">
    <property type="entry name" value="WH_DNA-bd_sf"/>
</dbReference>
<dbReference type="NCBIfam" id="NF000868">
    <property type="entry name" value="PRK00080.1"/>
    <property type="match status" value="1"/>
</dbReference>
<dbReference type="NCBIfam" id="TIGR00635">
    <property type="entry name" value="ruvB"/>
    <property type="match status" value="1"/>
</dbReference>
<dbReference type="PANTHER" id="PTHR42848">
    <property type="match status" value="1"/>
</dbReference>
<dbReference type="PANTHER" id="PTHR42848:SF1">
    <property type="entry name" value="HOLLIDAY JUNCTION BRANCH MIGRATION COMPLEX SUBUNIT RUVB"/>
    <property type="match status" value="1"/>
</dbReference>
<dbReference type="Pfam" id="PF17864">
    <property type="entry name" value="AAA_lid_4"/>
    <property type="match status" value="1"/>
</dbReference>
<dbReference type="Pfam" id="PF05491">
    <property type="entry name" value="RuvB_C"/>
    <property type="match status" value="1"/>
</dbReference>
<dbReference type="Pfam" id="PF05496">
    <property type="entry name" value="RuvB_N"/>
    <property type="match status" value="1"/>
</dbReference>
<dbReference type="PRINTS" id="PR00830">
    <property type="entry name" value="ENDOLAPTASE"/>
</dbReference>
<dbReference type="SMART" id="SM00382">
    <property type="entry name" value="AAA"/>
    <property type="match status" value="1"/>
</dbReference>
<dbReference type="SUPFAM" id="SSF52540">
    <property type="entry name" value="P-loop containing nucleoside triphosphate hydrolases"/>
    <property type="match status" value="1"/>
</dbReference>
<dbReference type="SUPFAM" id="SSF46785">
    <property type="entry name" value="Winged helix' DNA-binding domain"/>
    <property type="match status" value="1"/>
</dbReference>
<evidence type="ECO:0000255" key="1">
    <source>
        <dbReference type="HAMAP-Rule" id="MF_00016"/>
    </source>
</evidence>
<sequence length="355" mass="38911">MIETDKLAAERIIAATPASSHEEVFERALRPRQLDDYVGQEKVRGQLEIFIEAAKRRSEPLDHVLLFGPPGLGKTTLAHIIAREMGVNLRQTSGPVLERAGDLAALLTNLEANDVLFIDEIHRLSPVVEEILYPALEDYQIDIMIGEGPAARSVKLDLQPFTLVGATTRAGMLTNPLRDRFGIVARLEFYDAEQLSRIVRRSAALLNAQIDPNGALEIAKRSRGTPRIANRLLRRVRDYAEVKADGQITAAVADAALAMLDVDPVGFDLMDRKLLEAILHKFDGGPVGIDNLAAAIGEERDTIEDVLEPYLIQQGFLQRTPRGRVATLLTYRHFGLSAPAAGSAEGSMWNTPDGA</sequence>
<accession>A4JBL2</accession>
<gene>
    <name evidence="1" type="primary">ruvB</name>
    <name type="ordered locus">Bcep1808_0653</name>
</gene>
<protein>
    <recommendedName>
        <fullName evidence="1">Holliday junction branch migration complex subunit RuvB</fullName>
        <ecNumber evidence="1">3.6.4.-</ecNumber>
    </recommendedName>
</protein>
<comment type="function">
    <text evidence="1">The RuvA-RuvB-RuvC complex processes Holliday junction (HJ) DNA during genetic recombination and DNA repair, while the RuvA-RuvB complex plays an important role in the rescue of blocked DNA replication forks via replication fork reversal (RFR). RuvA specifically binds to HJ cruciform DNA, conferring on it an open structure. The RuvB hexamer acts as an ATP-dependent pump, pulling dsDNA into and through the RuvAB complex. RuvB forms 2 homohexamers on either side of HJ DNA bound by 1 or 2 RuvA tetramers; 4 subunits per hexamer contact DNA at a time. Coordinated motions by a converter formed by DNA-disengaged RuvB subunits stimulates ATP hydrolysis and nucleotide exchange. Immobilization of the converter enables RuvB to convert the ATP-contained energy into a lever motion, pulling 2 nucleotides of DNA out of the RuvA tetramer per ATP hydrolyzed, thus driving DNA branch migration. The RuvB motors rotate together with the DNA substrate, which together with the progressing nucleotide cycle form the mechanistic basis for DNA recombination by continuous HJ branch migration. Branch migration allows RuvC to scan DNA until it finds its consensus sequence, where it cleaves and resolves cruciform DNA.</text>
</comment>
<comment type="catalytic activity">
    <reaction evidence="1">
        <text>ATP + H2O = ADP + phosphate + H(+)</text>
        <dbReference type="Rhea" id="RHEA:13065"/>
        <dbReference type="ChEBI" id="CHEBI:15377"/>
        <dbReference type="ChEBI" id="CHEBI:15378"/>
        <dbReference type="ChEBI" id="CHEBI:30616"/>
        <dbReference type="ChEBI" id="CHEBI:43474"/>
        <dbReference type="ChEBI" id="CHEBI:456216"/>
    </reaction>
</comment>
<comment type="subunit">
    <text evidence="1">Homohexamer. Forms an RuvA(8)-RuvB(12)-Holliday junction (HJ) complex. HJ DNA is sandwiched between 2 RuvA tetramers; dsDNA enters through RuvA and exits via RuvB. An RuvB hexamer assembles on each DNA strand where it exits the tetramer. Each RuvB hexamer is contacted by two RuvA subunits (via domain III) on 2 adjacent RuvB subunits; this complex drives branch migration. In the full resolvosome a probable DNA-RuvA(4)-RuvB(12)-RuvC(2) complex forms which resolves the HJ.</text>
</comment>
<comment type="subcellular location">
    <subcellularLocation>
        <location evidence="1">Cytoplasm</location>
    </subcellularLocation>
</comment>
<comment type="domain">
    <text evidence="1">Has 3 domains, the large (RuvB-L) and small ATPase (RuvB-S) domains and the C-terminal head (RuvB-H) domain. The head domain binds DNA, while the ATPase domains jointly bind ATP, ADP or are empty depending on the state of the subunit in the translocation cycle. During a single DNA translocation step the structure of each domain remains the same, but their relative positions change.</text>
</comment>
<comment type="similarity">
    <text evidence="1">Belongs to the RuvB family.</text>
</comment>
<name>RUVB_BURVG</name>
<keyword id="KW-0067">ATP-binding</keyword>
<keyword id="KW-0963">Cytoplasm</keyword>
<keyword id="KW-0227">DNA damage</keyword>
<keyword id="KW-0233">DNA recombination</keyword>
<keyword id="KW-0234">DNA repair</keyword>
<keyword id="KW-0238">DNA-binding</keyword>
<keyword id="KW-0378">Hydrolase</keyword>
<keyword id="KW-0547">Nucleotide-binding</keyword>